<proteinExistence type="evidence at protein level"/>
<keyword id="KW-0123">Cardiotoxin</keyword>
<keyword id="KW-0204">Cytolysis</keyword>
<keyword id="KW-0903">Direct protein sequencing</keyword>
<keyword id="KW-1015">Disulfide bond</keyword>
<keyword id="KW-0472">Membrane</keyword>
<keyword id="KW-0964">Secreted</keyword>
<keyword id="KW-1052">Target cell membrane</keyword>
<keyword id="KW-1053">Target membrane</keyword>
<keyword id="KW-0800">Toxin</keyword>
<feature type="chain" id="PRO_0000093494" description="Cytotoxin 10" evidence="3">
    <location>
        <begin position="1"/>
        <end position="60"/>
    </location>
</feature>
<feature type="disulfide bond" evidence="1">
    <location>
        <begin position="3"/>
        <end position="21"/>
    </location>
</feature>
<feature type="disulfide bond" evidence="1">
    <location>
        <begin position="14"/>
        <end position="38"/>
    </location>
</feature>
<feature type="disulfide bond" evidence="1">
    <location>
        <begin position="42"/>
        <end position="53"/>
    </location>
</feature>
<feature type="disulfide bond" evidence="1">
    <location>
        <begin position="54"/>
        <end position="59"/>
    </location>
</feature>
<sequence length="60" mass="6682">LECNQLIPIAHKTCPEGKNLCYKMFMVSTSTVPVKRGCIDVCPKNSALVKYVCCNTDRCN</sequence>
<comment type="function">
    <text evidence="1 2">Shows cytolytic activity on many different cells by forming pore in lipid membranes. In vivo, increases heart rate or kills the animal by cardiac arrest. In addition, it binds to heparin with high affinity, interacts with Kv channel-interacting protein 1 (KCNIP1) in a calcium-independent manner, and binds to integrin alpha-V/beta-3 (ITGAV/ITGB3) with moderate affinity.</text>
</comment>
<comment type="subunit">
    <text evidence="1">Monomer in solution; Homodimer and oligomer in the presence of negatively charged lipids forming a pore with a size ranging between 20 and 30 Angstroms.</text>
</comment>
<comment type="subcellular location">
    <subcellularLocation>
        <location evidence="3">Secreted</location>
    </subcellularLocation>
    <subcellularLocation>
        <location evidence="1">Target cell membrane</location>
    </subcellularLocation>
</comment>
<comment type="tissue specificity">
    <text evidence="4">Expressed by the venom gland.</text>
</comment>
<comment type="toxic dose">
    <text evidence="3">LD(50) is 4.14 mg/kg by intravenous injection.</text>
</comment>
<comment type="miscellaneous">
    <text evidence="4">Is classified as a S-type cytotoxin, since a serine residue stands at position 28 (Ser-29 in standard classification).</text>
</comment>
<comment type="similarity">
    <text evidence="4">Belongs to the three-finger toxin family. Short-chain subfamily. Type IA cytotoxin sub-subfamily.</text>
</comment>
<dbReference type="PIR" id="A01718">
    <property type="entry name" value="H3NJ0E"/>
</dbReference>
<dbReference type="SMR" id="P01453"/>
<dbReference type="GO" id="GO:0005576">
    <property type="term" value="C:extracellular region"/>
    <property type="evidence" value="ECO:0007669"/>
    <property type="project" value="UniProtKB-SubCell"/>
</dbReference>
<dbReference type="GO" id="GO:0016020">
    <property type="term" value="C:membrane"/>
    <property type="evidence" value="ECO:0007669"/>
    <property type="project" value="UniProtKB-KW"/>
</dbReference>
<dbReference type="GO" id="GO:0044218">
    <property type="term" value="C:other organism cell membrane"/>
    <property type="evidence" value="ECO:0007669"/>
    <property type="project" value="UniProtKB-KW"/>
</dbReference>
<dbReference type="GO" id="GO:0090729">
    <property type="term" value="F:toxin activity"/>
    <property type="evidence" value="ECO:0007669"/>
    <property type="project" value="UniProtKB-KW"/>
</dbReference>
<dbReference type="GO" id="GO:0031640">
    <property type="term" value="P:killing of cells of another organism"/>
    <property type="evidence" value="ECO:0007669"/>
    <property type="project" value="UniProtKB-KW"/>
</dbReference>
<dbReference type="CDD" id="cd00206">
    <property type="entry name" value="TFP_snake_toxin"/>
    <property type="match status" value="1"/>
</dbReference>
<dbReference type="FunFam" id="2.10.60.10:FF:000024">
    <property type="entry name" value="Cytotoxin 1"/>
    <property type="match status" value="1"/>
</dbReference>
<dbReference type="Gene3D" id="2.10.60.10">
    <property type="entry name" value="CD59"/>
    <property type="match status" value="1"/>
</dbReference>
<dbReference type="InterPro" id="IPR003572">
    <property type="entry name" value="Cytotoxin_Cobra"/>
</dbReference>
<dbReference type="InterPro" id="IPR003571">
    <property type="entry name" value="Snake_3FTx"/>
</dbReference>
<dbReference type="InterPro" id="IPR045860">
    <property type="entry name" value="Snake_toxin-like_sf"/>
</dbReference>
<dbReference type="InterPro" id="IPR018354">
    <property type="entry name" value="Snake_toxin_con_site"/>
</dbReference>
<dbReference type="InterPro" id="IPR054131">
    <property type="entry name" value="Toxin_cobra-type"/>
</dbReference>
<dbReference type="Pfam" id="PF21947">
    <property type="entry name" value="Toxin_cobra-type"/>
    <property type="match status" value="1"/>
</dbReference>
<dbReference type="PRINTS" id="PR00282">
    <property type="entry name" value="CYTOTOXIN"/>
</dbReference>
<dbReference type="SUPFAM" id="SSF57302">
    <property type="entry name" value="Snake toxin-like"/>
    <property type="match status" value="1"/>
</dbReference>
<dbReference type="PROSITE" id="PS00272">
    <property type="entry name" value="SNAKE_TOXIN"/>
    <property type="match status" value="1"/>
</dbReference>
<reference key="1">
    <citation type="journal article" date="1976" name="Hoppe-Seyler's Z. Physiol. Chem.">
        <title>Snake venom toxins. The amino acid sequence of three toxins (CM-2e, CM-4a and CM-) from Naja haje annulifera (Egyptian cobra) venom.</title>
        <authorList>
            <person name="Joubert F.J."/>
        </authorList>
    </citation>
    <scope>PROTEIN SEQUENCE</scope>
    <scope>SUBCELLULAR LOCATION</scope>
    <scope>TOXIC DOSE</scope>
    <source>
        <tissue>Venom</tissue>
    </source>
</reference>
<name>3SAA_NAJHA</name>
<organism>
    <name type="scientific">Naja annulifera</name>
    <name type="common">Banded Egyptian cobra</name>
    <name type="synonym">Naja haje annulifera</name>
    <dbReference type="NCBI Taxonomy" id="96794"/>
    <lineage>
        <taxon>Eukaryota</taxon>
        <taxon>Metazoa</taxon>
        <taxon>Chordata</taxon>
        <taxon>Craniata</taxon>
        <taxon>Vertebrata</taxon>
        <taxon>Euteleostomi</taxon>
        <taxon>Lepidosauria</taxon>
        <taxon>Squamata</taxon>
        <taxon>Bifurcata</taxon>
        <taxon>Unidentata</taxon>
        <taxon>Episquamata</taxon>
        <taxon>Toxicofera</taxon>
        <taxon>Serpentes</taxon>
        <taxon>Colubroidea</taxon>
        <taxon>Elapidae</taxon>
        <taxon>Elapinae</taxon>
        <taxon>Naja</taxon>
    </lineage>
</organism>
<evidence type="ECO:0000250" key="1">
    <source>
        <dbReference type="UniProtKB" id="P60301"/>
    </source>
</evidence>
<evidence type="ECO:0000250" key="2">
    <source>
        <dbReference type="UniProtKB" id="P60304"/>
    </source>
</evidence>
<evidence type="ECO:0000269" key="3">
    <source>
    </source>
</evidence>
<evidence type="ECO:0000305" key="4"/>
<protein>
    <recommendedName>
        <fullName>Cytotoxin 10</fullName>
    </recommendedName>
    <alternativeName>
        <fullName>Toxin CM-4a</fullName>
    </alternativeName>
</protein>
<accession>P01453</accession>